<accession>P19014</accession>
<keyword id="KW-0007">Acetylation</keyword>
<keyword id="KW-0903">Direct protein sequencing</keyword>
<keyword id="KW-0349">Heme</keyword>
<keyword id="KW-0408">Iron</keyword>
<keyword id="KW-0479">Metal-binding</keyword>
<keyword id="KW-0561">Oxygen transport</keyword>
<keyword id="KW-0597">Phosphoprotein</keyword>
<keyword id="KW-0813">Transport</keyword>
<protein>
    <recommendedName>
        <fullName>Hemoglobin subunit alpha</fullName>
    </recommendedName>
    <alternativeName>
        <fullName>Alpha-globin</fullName>
    </alternativeName>
    <alternativeName>
        <fullName>Hemoglobin alpha chain</fullName>
    </alternativeName>
    <component>
        <recommendedName>
            <fullName evidence="2">Hemopressin</fullName>
        </recommendedName>
    </component>
</protein>
<proteinExistence type="evidence at protein level"/>
<dbReference type="PIR" id="A37171">
    <property type="entry name" value="A37171"/>
</dbReference>
<dbReference type="PIR" id="B37171">
    <property type="entry name" value="B37171"/>
</dbReference>
<dbReference type="SMR" id="P19014"/>
<dbReference type="GO" id="GO:0072562">
    <property type="term" value="C:blood microparticle"/>
    <property type="evidence" value="ECO:0007669"/>
    <property type="project" value="TreeGrafter"/>
</dbReference>
<dbReference type="GO" id="GO:0031838">
    <property type="term" value="C:haptoglobin-hemoglobin complex"/>
    <property type="evidence" value="ECO:0007669"/>
    <property type="project" value="TreeGrafter"/>
</dbReference>
<dbReference type="GO" id="GO:0005833">
    <property type="term" value="C:hemoglobin complex"/>
    <property type="evidence" value="ECO:0007669"/>
    <property type="project" value="InterPro"/>
</dbReference>
<dbReference type="GO" id="GO:0031720">
    <property type="term" value="F:haptoglobin binding"/>
    <property type="evidence" value="ECO:0007669"/>
    <property type="project" value="TreeGrafter"/>
</dbReference>
<dbReference type="GO" id="GO:0020037">
    <property type="term" value="F:heme binding"/>
    <property type="evidence" value="ECO:0007669"/>
    <property type="project" value="InterPro"/>
</dbReference>
<dbReference type="GO" id="GO:0005506">
    <property type="term" value="F:iron ion binding"/>
    <property type="evidence" value="ECO:0007669"/>
    <property type="project" value="InterPro"/>
</dbReference>
<dbReference type="GO" id="GO:0043177">
    <property type="term" value="F:organic acid binding"/>
    <property type="evidence" value="ECO:0007669"/>
    <property type="project" value="TreeGrafter"/>
</dbReference>
<dbReference type="GO" id="GO:0019825">
    <property type="term" value="F:oxygen binding"/>
    <property type="evidence" value="ECO:0007669"/>
    <property type="project" value="InterPro"/>
</dbReference>
<dbReference type="GO" id="GO:0005344">
    <property type="term" value="F:oxygen carrier activity"/>
    <property type="evidence" value="ECO:0007669"/>
    <property type="project" value="UniProtKB-KW"/>
</dbReference>
<dbReference type="GO" id="GO:0004601">
    <property type="term" value="F:peroxidase activity"/>
    <property type="evidence" value="ECO:0007669"/>
    <property type="project" value="TreeGrafter"/>
</dbReference>
<dbReference type="GO" id="GO:0042744">
    <property type="term" value="P:hydrogen peroxide catabolic process"/>
    <property type="evidence" value="ECO:0007669"/>
    <property type="project" value="TreeGrafter"/>
</dbReference>
<dbReference type="CDD" id="cd08927">
    <property type="entry name" value="Hb-alpha-like"/>
    <property type="match status" value="1"/>
</dbReference>
<dbReference type="FunFam" id="1.10.490.10:FF:000002">
    <property type="entry name" value="Hemoglobin subunit alpha"/>
    <property type="match status" value="1"/>
</dbReference>
<dbReference type="Gene3D" id="1.10.490.10">
    <property type="entry name" value="Globins"/>
    <property type="match status" value="1"/>
</dbReference>
<dbReference type="InterPro" id="IPR000971">
    <property type="entry name" value="Globin"/>
</dbReference>
<dbReference type="InterPro" id="IPR009050">
    <property type="entry name" value="Globin-like_sf"/>
</dbReference>
<dbReference type="InterPro" id="IPR012292">
    <property type="entry name" value="Globin/Proto"/>
</dbReference>
<dbReference type="InterPro" id="IPR002338">
    <property type="entry name" value="Hemoglobin_a-typ"/>
</dbReference>
<dbReference type="InterPro" id="IPR050056">
    <property type="entry name" value="Hemoglobin_oxygen_transport"/>
</dbReference>
<dbReference type="InterPro" id="IPR002339">
    <property type="entry name" value="Hemoglobin_pi"/>
</dbReference>
<dbReference type="PANTHER" id="PTHR11442">
    <property type="entry name" value="HEMOGLOBIN FAMILY MEMBER"/>
    <property type="match status" value="1"/>
</dbReference>
<dbReference type="PANTHER" id="PTHR11442:SF48">
    <property type="entry name" value="HEMOGLOBIN SUBUNIT ALPHA"/>
    <property type="match status" value="1"/>
</dbReference>
<dbReference type="Pfam" id="PF00042">
    <property type="entry name" value="Globin"/>
    <property type="match status" value="1"/>
</dbReference>
<dbReference type="PRINTS" id="PR00612">
    <property type="entry name" value="ALPHAHAEM"/>
</dbReference>
<dbReference type="PRINTS" id="PR00815">
    <property type="entry name" value="PIHAEM"/>
</dbReference>
<dbReference type="SUPFAM" id="SSF46458">
    <property type="entry name" value="Globin-like"/>
    <property type="match status" value="1"/>
</dbReference>
<dbReference type="PROSITE" id="PS01033">
    <property type="entry name" value="GLOBIN"/>
    <property type="match status" value="1"/>
</dbReference>
<evidence type="ECO:0000250" key="1">
    <source>
        <dbReference type="UniProtKB" id="P01942"/>
    </source>
</evidence>
<evidence type="ECO:0000250" key="2">
    <source>
        <dbReference type="UniProtKB" id="P01946"/>
    </source>
</evidence>
<evidence type="ECO:0000250" key="3">
    <source>
        <dbReference type="UniProtKB" id="P18969"/>
    </source>
</evidence>
<evidence type="ECO:0000250" key="4">
    <source>
        <dbReference type="UniProtKB" id="P69905"/>
    </source>
</evidence>
<evidence type="ECO:0000255" key="5">
    <source>
        <dbReference type="PROSITE-ProRule" id="PRU00238"/>
    </source>
</evidence>
<sequence>MVLSADDKANIKATWEKIGGHGAEYGAEALERMFASFPTTKTYFPHFDVSHGSAQVKSHGKKVADALANAAHHLDDLPGALSALSDLHAHKLRVDPVNFKLLGHCLLVTLATHLQAGLTPAAHASLDKFLASVSTVLTSKYR</sequence>
<gene>
    <name type="primary">HBA</name>
</gene>
<organism>
    <name type="scientific">Cricetomys gambianus</name>
    <name type="common">Northern giant pouched rat</name>
    <dbReference type="NCBI Taxonomy" id="10085"/>
    <lineage>
        <taxon>Eukaryota</taxon>
        <taxon>Metazoa</taxon>
        <taxon>Chordata</taxon>
        <taxon>Craniata</taxon>
        <taxon>Vertebrata</taxon>
        <taxon>Euteleostomi</taxon>
        <taxon>Mammalia</taxon>
        <taxon>Eutheria</taxon>
        <taxon>Euarchontoglires</taxon>
        <taxon>Glires</taxon>
        <taxon>Rodentia</taxon>
        <taxon>Myomorpha</taxon>
        <taxon>Muroidea</taxon>
        <taxon>Nesomyidae</taxon>
        <taxon>Cricetomyinae</taxon>
        <taxon>Cricetomys</taxon>
    </lineage>
</organism>
<name>HBA_CRIGA</name>
<reference key="1">
    <citation type="journal article" date="1990" name="Biochem. Soc. Trans.">
        <title>Primary structure of the alpha-chains of the haemoglobins of the Gambia rat (Cricetomys gambianus Waterhouse).</title>
        <authorList>
            <person name="Hombrados I."/>
            <person name="Vidal Y."/>
            <person name="Rodewald K."/>
            <person name="Braunitzer G."/>
            <person name="Neuzil E."/>
        </authorList>
    </citation>
    <scope>PROTEIN SEQUENCE OF 2-142</scope>
</reference>
<feature type="initiator methionine" description="Removed" evidence="3">
    <location>
        <position position="1"/>
    </location>
</feature>
<feature type="chain" id="PRO_0000052608" description="Hemoglobin subunit alpha">
    <location>
        <begin position="2"/>
        <end position="142"/>
    </location>
</feature>
<feature type="peptide" id="PRO_0000455860" description="Hemopressin" evidence="2">
    <location>
        <begin position="96"/>
        <end position="104"/>
    </location>
</feature>
<feature type="domain" description="Globin" evidence="5">
    <location>
        <begin position="2"/>
        <end position="142"/>
    </location>
</feature>
<feature type="binding site" evidence="5">
    <location>
        <position position="59"/>
    </location>
    <ligand>
        <name>O2</name>
        <dbReference type="ChEBI" id="CHEBI:15379"/>
    </ligand>
</feature>
<feature type="binding site" description="proximal binding residue" evidence="5">
    <location>
        <position position="88"/>
    </location>
    <ligand>
        <name>heme b</name>
        <dbReference type="ChEBI" id="CHEBI:60344"/>
    </ligand>
    <ligandPart>
        <name>Fe</name>
        <dbReference type="ChEBI" id="CHEBI:18248"/>
    </ligandPart>
</feature>
<feature type="modified residue" description="Phosphoserine" evidence="4">
    <location>
        <position position="4"/>
    </location>
</feature>
<feature type="modified residue" description="N6-succinyllysine" evidence="1">
    <location>
        <position position="8"/>
    </location>
</feature>
<feature type="modified residue" description="N6-succinyllysine" evidence="1">
    <location>
        <position position="12"/>
    </location>
</feature>
<feature type="modified residue" description="N6-acetyllysine; alternate" evidence="4">
    <location>
        <position position="17"/>
    </location>
</feature>
<feature type="modified residue" description="N6-succinyllysine; alternate" evidence="1">
    <location>
        <position position="17"/>
    </location>
</feature>
<feature type="modified residue" description="Phosphotyrosine" evidence="4">
    <location>
        <position position="25"/>
    </location>
</feature>
<feature type="modified residue" description="Phosphoserine" evidence="4">
    <location>
        <position position="36"/>
    </location>
</feature>
<feature type="modified residue" description="N6-succinyllysine" evidence="1">
    <location>
        <position position="41"/>
    </location>
</feature>
<feature type="modified residue" description="Phosphoserine" evidence="4">
    <location>
        <position position="50"/>
    </location>
</feature>
<feature type="modified residue" description="Phosphothreonine" evidence="1">
    <location>
        <position position="109"/>
    </location>
</feature>
<feature type="modified residue" description="Phosphoserine" evidence="1">
    <location>
        <position position="125"/>
    </location>
</feature>
<feature type="modified residue" description="Phosphoserine" evidence="1">
    <location>
        <position position="132"/>
    </location>
</feature>
<feature type="modified residue" description="Phosphothreonine" evidence="1">
    <location>
        <position position="135"/>
    </location>
</feature>
<feature type="modified residue" description="Phosphothreonine" evidence="1">
    <location>
        <position position="138"/>
    </location>
</feature>
<feature type="modified residue" description="Phosphoserine" evidence="1">
    <location>
        <position position="139"/>
    </location>
</feature>
<feature type="sequence variant">
    <original>P</original>
    <variation>A</variation>
    <location>
        <position position="45"/>
    </location>
</feature>
<comment type="function">
    <text>Involved in oxygen transport from the lung to the various peripheral tissues.</text>
</comment>
<comment type="function">
    <molecule>Hemopressin</molecule>
    <text evidence="2">Hemopressin acts as an antagonist peptide of the cannabinoid receptor CNR1. Hemopressin-binding efficiently blocks cannabinoid receptor CNR1 and subsequent signaling.</text>
</comment>
<comment type="subunit">
    <text>Heterotetramer of two alpha chains and two beta chains.</text>
</comment>
<comment type="tissue specificity">
    <text>Red blood cells.</text>
</comment>
<comment type="similarity">
    <text evidence="5">Belongs to the globin family.</text>
</comment>